<accession>A1RCB2</accession>
<sequence length="45" mass="5264">MSKRTFQPNNRRRAKKHGFRLRMRTRAGRAILAARRGKGRVELSA</sequence>
<gene>
    <name evidence="1" type="primary">rpmH</name>
    <name type="ordered locus">AAur_4209</name>
</gene>
<protein>
    <recommendedName>
        <fullName evidence="1">Large ribosomal subunit protein bL34</fullName>
    </recommendedName>
    <alternativeName>
        <fullName evidence="2">50S ribosomal protein L34</fullName>
    </alternativeName>
</protein>
<reference key="1">
    <citation type="journal article" date="2006" name="PLoS Genet.">
        <title>Secrets of soil survival revealed by the genome sequence of Arthrobacter aurescens TC1.</title>
        <authorList>
            <person name="Mongodin E.F."/>
            <person name="Shapir N."/>
            <person name="Daugherty S.C."/>
            <person name="DeBoy R.T."/>
            <person name="Emerson J.B."/>
            <person name="Shvartzbeyn A."/>
            <person name="Radune D."/>
            <person name="Vamathevan J."/>
            <person name="Riggs F."/>
            <person name="Grinberg V."/>
            <person name="Khouri H.M."/>
            <person name="Wackett L.P."/>
            <person name="Nelson K.E."/>
            <person name="Sadowsky M.J."/>
        </authorList>
    </citation>
    <scope>NUCLEOTIDE SEQUENCE [LARGE SCALE GENOMIC DNA]</scope>
    <source>
        <strain>TC1</strain>
    </source>
</reference>
<name>RL34_PAEAT</name>
<dbReference type="EMBL" id="CP000474">
    <property type="protein sequence ID" value="ABM08463.1"/>
    <property type="molecule type" value="Genomic_DNA"/>
</dbReference>
<dbReference type="RefSeq" id="WP_011776797.1">
    <property type="nucleotide sequence ID" value="NC_008711.1"/>
</dbReference>
<dbReference type="SMR" id="A1RCB2"/>
<dbReference type="STRING" id="290340.AAur_4209"/>
<dbReference type="GeneID" id="97303062"/>
<dbReference type="KEGG" id="aau:AAur_4209"/>
<dbReference type="eggNOG" id="COG0230">
    <property type="taxonomic scope" value="Bacteria"/>
</dbReference>
<dbReference type="HOGENOM" id="CLU_129938_2_1_11"/>
<dbReference type="Proteomes" id="UP000000637">
    <property type="component" value="Chromosome"/>
</dbReference>
<dbReference type="GO" id="GO:1990904">
    <property type="term" value="C:ribonucleoprotein complex"/>
    <property type="evidence" value="ECO:0007669"/>
    <property type="project" value="UniProtKB-KW"/>
</dbReference>
<dbReference type="GO" id="GO:0005840">
    <property type="term" value="C:ribosome"/>
    <property type="evidence" value="ECO:0007669"/>
    <property type="project" value="UniProtKB-KW"/>
</dbReference>
<dbReference type="GO" id="GO:0003735">
    <property type="term" value="F:structural constituent of ribosome"/>
    <property type="evidence" value="ECO:0007669"/>
    <property type="project" value="InterPro"/>
</dbReference>
<dbReference type="GO" id="GO:0006412">
    <property type="term" value="P:translation"/>
    <property type="evidence" value="ECO:0007669"/>
    <property type="project" value="UniProtKB-UniRule"/>
</dbReference>
<dbReference type="FunFam" id="1.10.287.3980:FF:000001">
    <property type="entry name" value="Mitochondrial ribosomal protein L34"/>
    <property type="match status" value="1"/>
</dbReference>
<dbReference type="Gene3D" id="1.10.287.3980">
    <property type="match status" value="1"/>
</dbReference>
<dbReference type="HAMAP" id="MF_00391">
    <property type="entry name" value="Ribosomal_bL34"/>
    <property type="match status" value="1"/>
</dbReference>
<dbReference type="InterPro" id="IPR000271">
    <property type="entry name" value="Ribosomal_bL34"/>
</dbReference>
<dbReference type="InterPro" id="IPR020939">
    <property type="entry name" value="Ribosomal_bL34_CS"/>
</dbReference>
<dbReference type="NCBIfam" id="TIGR01030">
    <property type="entry name" value="rpmH_bact"/>
    <property type="match status" value="1"/>
</dbReference>
<dbReference type="PANTHER" id="PTHR14503:SF4">
    <property type="entry name" value="LARGE RIBOSOMAL SUBUNIT PROTEIN BL34M"/>
    <property type="match status" value="1"/>
</dbReference>
<dbReference type="PANTHER" id="PTHR14503">
    <property type="entry name" value="MITOCHONDRIAL RIBOSOMAL PROTEIN 34 FAMILY MEMBER"/>
    <property type="match status" value="1"/>
</dbReference>
<dbReference type="Pfam" id="PF00468">
    <property type="entry name" value="Ribosomal_L34"/>
    <property type="match status" value="1"/>
</dbReference>
<dbReference type="PROSITE" id="PS00784">
    <property type="entry name" value="RIBOSOMAL_L34"/>
    <property type="match status" value="1"/>
</dbReference>
<feature type="chain" id="PRO_1000013273" description="Large ribosomal subunit protein bL34">
    <location>
        <begin position="1"/>
        <end position="45"/>
    </location>
</feature>
<comment type="similarity">
    <text evidence="1">Belongs to the bacterial ribosomal protein bL34 family.</text>
</comment>
<evidence type="ECO:0000255" key="1">
    <source>
        <dbReference type="HAMAP-Rule" id="MF_00391"/>
    </source>
</evidence>
<evidence type="ECO:0000305" key="2"/>
<organism>
    <name type="scientific">Paenarthrobacter aurescens (strain TC1)</name>
    <dbReference type="NCBI Taxonomy" id="290340"/>
    <lineage>
        <taxon>Bacteria</taxon>
        <taxon>Bacillati</taxon>
        <taxon>Actinomycetota</taxon>
        <taxon>Actinomycetes</taxon>
        <taxon>Micrococcales</taxon>
        <taxon>Micrococcaceae</taxon>
        <taxon>Paenarthrobacter</taxon>
    </lineage>
</organism>
<proteinExistence type="inferred from homology"/>
<keyword id="KW-0687">Ribonucleoprotein</keyword>
<keyword id="KW-0689">Ribosomal protein</keyword>